<sequence>MSNMNQTIMDAFHFRHATKQFDPQKKVSKEDFETILESGRLSPSSLGLEPWKFVVIQDQALRDELKAHSWGAAKQLDTASHFVLIFARKNVTSRSPYVQHMLRDIKKYEAQTIPAVEQKFDAFQADFHISDNDQALYDWSSKQTYIALGNMMTTAALLGIDSCPMEGFSLDTVTDILANKGILDTEQFGLSVMVAFGYRQQDPPKNKTRQAYEDVIEWVGPKE</sequence>
<proteinExistence type="inferred from homology"/>
<dbReference type="EC" id="1.-.-.-"/>
<dbReference type="EMBL" id="BA000033">
    <property type="protein sequence ID" value="BAB96308.1"/>
    <property type="molecule type" value="Genomic_DNA"/>
</dbReference>
<dbReference type="RefSeq" id="WP_000069098.1">
    <property type="nucleotide sequence ID" value="NC_003923.1"/>
</dbReference>
<dbReference type="SMR" id="Q79ZZ6"/>
<dbReference type="KEGG" id="sam:MW2443"/>
<dbReference type="HOGENOM" id="CLU_070764_4_1_9"/>
<dbReference type="GO" id="GO:0005829">
    <property type="term" value="C:cytosol"/>
    <property type="evidence" value="ECO:0007669"/>
    <property type="project" value="TreeGrafter"/>
</dbReference>
<dbReference type="GO" id="GO:0046857">
    <property type="term" value="F:oxidoreductase activity, acting on other nitrogenous compounds as donors, with NAD or NADP as acceptor"/>
    <property type="evidence" value="ECO:0007669"/>
    <property type="project" value="TreeGrafter"/>
</dbReference>
<dbReference type="GO" id="GO:0046256">
    <property type="term" value="P:2,4,6-trinitrotoluene catabolic process"/>
    <property type="evidence" value="ECO:0007669"/>
    <property type="project" value="TreeGrafter"/>
</dbReference>
<dbReference type="CDD" id="cd02149">
    <property type="entry name" value="NfsB-like"/>
    <property type="match status" value="1"/>
</dbReference>
<dbReference type="FunFam" id="3.40.109.10:FF:000008">
    <property type="entry name" value="Putative NAD(P)H nitroreductase"/>
    <property type="match status" value="1"/>
</dbReference>
<dbReference type="Gene3D" id="3.40.109.10">
    <property type="entry name" value="NADH Oxidase"/>
    <property type="match status" value="1"/>
</dbReference>
<dbReference type="InterPro" id="IPR033878">
    <property type="entry name" value="NfsB-like"/>
</dbReference>
<dbReference type="InterPro" id="IPR029479">
    <property type="entry name" value="Nitroreductase"/>
</dbReference>
<dbReference type="InterPro" id="IPR000415">
    <property type="entry name" value="Nitroreductase-like"/>
</dbReference>
<dbReference type="InterPro" id="IPR050627">
    <property type="entry name" value="Nitroreductase/BluB"/>
</dbReference>
<dbReference type="PANTHER" id="PTHR23026">
    <property type="entry name" value="NADPH NITROREDUCTASE"/>
    <property type="match status" value="1"/>
</dbReference>
<dbReference type="PANTHER" id="PTHR23026:SF125">
    <property type="entry name" value="OXYGEN-INSENSITIVE NAD(P)H NITROREDUCTASE"/>
    <property type="match status" value="1"/>
</dbReference>
<dbReference type="Pfam" id="PF00881">
    <property type="entry name" value="Nitroreductase"/>
    <property type="match status" value="1"/>
</dbReference>
<dbReference type="SUPFAM" id="SSF55469">
    <property type="entry name" value="FMN-dependent nitroreductase-like"/>
    <property type="match status" value="1"/>
</dbReference>
<protein>
    <recommendedName>
        <fullName>Putative NAD(P)H nitroreductase MW2443</fullName>
        <ecNumber>1.-.-.-</ecNumber>
    </recommendedName>
</protein>
<evidence type="ECO:0000305" key="1"/>
<comment type="cofactor">
    <cofactor evidence="1">
        <name>FMN</name>
        <dbReference type="ChEBI" id="CHEBI:58210"/>
    </cofactor>
</comment>
<comment type="similarity">
    <text evidence="1">Belongs to the nitroreductase family.</text>
</comment>
<keyword id="KW-0285">Flavoprotein</keyword>
<keyword id="KW-0288">FMN</keyword>
<keyword id="KW-0520">NAD</keyword>
<keyword id="KW-0521">NADP</keyword>
<keyword id="KW-0560">Oxidoreductase</keyword>
<accession>Q79ZZ6</accession>
<organism>
    <name type="scientific">Staphylococcus aureus (strain MW2)</name>
    <dbReference type="NCBI Taxonomy" id="196620"/>
    <lineage>
        <taxon>Bacteria</taxon>
        <taxon>Bacillati</taxon>
        <taxon>Bacillota</taxon>
        <taxon>Bacilli</taxon>
        <taxon>Bacillales</taxon>
        <taxon>Staphylococcaceae</taxon>
        <taxon>Staphylococcus</taxon>
    </lineage>
</organism>
<gene>
    <name type="ordered locus">MW2443</name>
</gene>
<name>Y2443_STAAW</name>
<reference key="1">
    <citation type="journal article" date="2002" name="Lancet">
        <title>Genome and virulence determinants of high virulence community-acquired MRSA.</title>
        <authorList>
            <person name="Baba T."/>
            <person name="Takeuchi F."/>
            <person name="Kuroda M."/>
            <person name="Yuzawa H."/>
            <person name="Aoki K."/>
            <person name="Oguchi A."/>
            <person name="Nagai Y."/>
            <person name="Iwama N."/>
            <person name="Asano K."/>
            <person name="Naimi T."/>
            <person name="Kuroda H."/>
            <person name="Cui L."/>
            <person name="Yamamoto K."/>
            <person name="Hiramatsu K."/>
        </authorList>
    </citation>
    <scope>NUCLEOTIDE SEQUENCE [LARGE SCALE GENOMIC DNA]</scope>
    <source>
        <strain>MW2</strain>
    </source>
</reference>
<feature type="chain" id="PRO_0000277535" description="Putative NAD(P)H nitroreductase MW2443">
    <location>
        <begin position="1"/>
        <end position="223"/>
    </location>
</feature>